<name>DH16C_ORYSJ</name>
<dbReference type="EMBL" id="AC145325">
    <property type="protein sequence ID" value="AAX96131.1"/>
    <property type="molecule type" value="Genomic_DNA"/>
</dbReference>
<dbReference type="EMBL" id="DP000010">
    <property type="protein sequence ID" value="ABA93491.1"/>
    <property type="molecule type" value="Genomic_DNA"/>
</dbReference>
<dbReference type="EMBL" id="AP008217">
    <property type="protein sequence ID" value="BAF28205.1"/>
    <property type="molecule type" value="Genomic_DNA"/>
</dbReference>
<dbReference type="EMBL" id="AP014967">
    <property type="protein sequence ID" value="BAT13914.1"/>
    <property type="molecule type" value="Genomic_DNA"/>
</dbReference>
<dbReference type="EMBL" id="CM000148">
    <property type="protein sequence ID" value="EAZ18260.1"/>
    <property type="molecule type" value="Genomic_DNA"/>
</dbReference>
<dbReference type="EMBL" id="AK071366">
    <property type="protein sequence ID" value="BAG92454.1"/>
    <property type="molecule type" value="mRNA"/>
</dbReference>
<dbReference type="RefSeq" id="XP_015617610.1">
    <property type="nucleotide sequence ID" value="XM_015762124.1"/>
</dbReference>
<dbReference type="FunCoup" id="Q2R4Z7">
    <property type="interactions" value="84"/>
</dbReference>
<dbReference type="STRING" id="39947.Q2R4Z7"/>
<dbReference type="PaxDb" id="39947-Q2R4Z7"/>
<dbReference type="EnsemblPlants" id="Os11t0454000-01">
    <property type="protein sequence ID" value="Os11t0454000-01"/>
    <property type="gene ID" value="Os11g0454000"/>
</dbReference>
<dbReference type="Gramene" id="Os11t0454000-01">
    <property type="protein sequence ID" value="Os11t0454000-01"/>
    <property type="gene ID" value="Os11g0454000"/>
</dbReference>
<dbReference type="KEGG" id="dosa:Os11g0454000"/>
<dbReference type="eggNOG" id="ENOG502S4VW">
    <property type="taxonomic scope" value="Eukaryota"/>
</dbReference>
<dbReference type="HOGENOM" id="CLU_060028_1_0_1"/>
<dbReference type="InParanoid" id="Q2R4Z7"/>
<dbReference type="OMA" id="ISSCFRH"/>
<dbReference type="Proteomes" id="UP000000763">
    <property type="component" value="Chromosome 11"/>
</dbReference>
<dbReference type="Proteomes" id="UP000007752">
    <property type="component" value="Chromosome 11"/>
</dbReference>
<dbReference type="Proteomes" id="UP000059680">
    <property type="component" value="Chromosome 11"/>
</dbReference>
<dbReference type="GO" id="GO:0009631">
    <property type="term" value="P:cold acclimation"/>
    <property type="evidence" value="ECO:0000318"/>
    <property type="project" value="GO_Central"/>
</dbReference>
<dbReference type="GO" id="GO:0009737">
    <property type="term" value="P:response to abscisic acid"/>
    <property type="evidence" value="ECO:0000318"/>
    <property type="project" value="GO_Central"/>
</dbReference>
<dbReference type="GO" id="GO:0009414">
    <property type="term" value="P:response to water deprivation"/>
    <property type="evidence" value="ECO:0000318"/>
    <property type="project" value="GO_Central"/>
</dbReference>
<dbReference type="InterPro" id="IPR000167">
    <property type="entry name" value="Dehydrin"/>
</dbReference>
<dbReference type="InterPro" id="IPR030513">
    <property type="entry name" value="Dehydrin_CS"/>
</dbReference>
<dbReference type="PANTHER" id="PTHR33346:SF57">
    <property type="entry name" value="DEHYDRIN RAB16B"/>
    <property type="match status" value="1"/>
</dbReference>
<dbReference type="PANTHER" id="PTHR33346">
    <property type="entry name" value="DEHYDRIN XERO 2-RELATED"/>
    <property type="match status" value="1"/>
</dbReference>
<dbReference type="Pfam" id="PF00257">
    <property type="entry name" value="Dehydrin"/>
    <property type="match status" value="1"/>
</dbReference>
<dbReference type="PROSITE" id="PS00315">
    <property type="entry name" value="DEHYDRIN_1"/>
    <property type="match status" value="1"/>
</dbReference>
<dbReference type="PROSITE" id="PS00823">
    <property type="entry name" value="DEHYDRIN_2"/>
    <property type="match status" value="2"/>
</dbReference>
<gene>
    <name type="primary">RAB16C</name>
    <name type="ordered locus">Os11g0454000</name>
    <name type="ordered locus">LOC_Os11g26760</name>
    <name type="ORF">OsJ_032469</name>
</gene>
<comment type="similarity">
    <text evidence="2">Belongs to the plant dehydrin family.</text>
</comment>
<accession>Q2R4Z7</accession>
<accession>B7EJA7</accession>
<accession>P22912</accession>
<accession>Q53L96</accession>
<protein>
    <recommendedName>
        <fullName>Dehydrin Rab16C</fullName>
    </recommendedName>
</protein>
<proteinExistence type="evidence at transcript level"/>
<evidence type="ECO:0000256" key="1">
    <source>
        <dbReference type="SAM" id="MobiDB-lite"/>
    </source>
</evidence>
<evidence type="ECO:0000305" key="2"/>
<organism>
    <name type="scientific">Oryza sativa subsp. japonica</name>
    <name type="common">Rice</name>
    <dbReference type="NCBI Taxonomy" id="39947"/>
    <lineage>
        <taxon>Eukaryota</taxon>
        <taxon>Viridiplantae</taxon>
        <taxon>Streptophyta</taxon>
        <taxon>Embryophyta</taxon>
        <taxon>Tracheophyta</taxon>
        <taxon>Spermatophyta</taxon>
        <taxon>Magnoliopsida</taxon>
        <taxon>Liliopsida</taxon>
        <taxon>Poales</taxon>
        <taxon>Poaceae</taxon>
        <taxon>BOP clade</taxon>
        <taxon>Oryzoideae</taxon>
        <taxon>Oryzeae</taxon>
        <taxon>Oryzinae</taxon>
        <taxon>Oryza</taxon>
        <taxon>Oryza sativa</taxon>
    </lineage>
</organism>
<reference key="1">
    <citation type="journal article" date="2005" name="BMC Biol.">
        <title>The sequence of rice chromosomes 11 and 12, rich in disease resistance genes and recent gene duplications.</title>
        <authorList>
            <consortium name="The rice chromosomes 11 and 12 sequencing consortia"/>
        </authorList>
    </citation>
    <scope>NUCLEOTIDE SEQUENCE [LARGE SCALE GENOMIC DNA]</scope>
    <source>
        <strain>cv. Nipponbare</strain>
    </source>
</reference>
<reference key="2">
    <citation type="journal article" date="2005" name="Nature">
        <title>The map-based sequence of the rice genome.</title>
        <authorList>
            <consortium name="International rice genome sequencing project (IRGSP)"/>
        </authorList>
    </citation>
    <scope>NUCLEOTIDE SEQUENCE [LARGE SCALE GENOMIC DNA]</scope>
    <source>
        <strain>cv. Nipponbare</strain>
    </source>
</reference>
<reference key="3">
    <citation type="journal article" date="2008" name="Nucleic Acids Res.">
        <title>The rice annotation project database (RAP-DB): 2008 update.</title>
        <authorList>
            <consortium name="The rice annotation project (RAP)"/>
        </authorList>
    </citation>
    <scope>GENOME REANNOTATION</scope>
    <source>
        <strain>cv. Nipponbare</strain>
    </source>
</reference>
<reference key="4">
    <citation type="journal article" date="2013" name="Rice">
        <title>Improvement of the Oryza sativa Nipponbare reference genome using next generation sequence and optical map data.</title>
        <authorList>
            <person name="Kawahara Y."/>
            <person name="de la Bastide M."/>
            <person name="Hamilton J.P."/>
            <person name="Kanamori H."/>
            <person name="McCombie W.R."/>
            <person name="Ouyang S."/>
            <person name="Schwartz D.C."/>
            <person name="Tanaka T."/>
            <person name="Wu J."/>
            <person name="Zhou S."/>
            <person name="Childs K.L."/>
            <person name="Davidson R.M."/>
            <person name="Lin H."/>
            <person name="Quesada-Ocampo L."/>
            <person name="Vaillancourt B."/>
            <person name="Sakai H."/>
            <person name="Lee S.S."/>
            <person name="Kim J."/>
            <person name="Numa H."/>
            <person name="Itoh T."/>
            <person name="Buell C.R."/>
            <person name="Matsumoto T."/>
        </authorList>
    </citation>
    <scope>GENOME REANNOTATION</scope>
    <source>
        <strain>cv. Nipponbare</strain>
    </source>
</reference>
<reference key="5">
    <citation type="journal article" date="2005" name="PLoS Biol.">
        <title>The genomes of Oryza sativa: a history of duplications.</title>
        <authorList>
            <person name="Yu J."/>
            <person name="Wang J."/>
            <person name="Lin W."/>
            <person name="Li S."/>
            <person name="Li H."/>
            <person name="Zhou J."/>
            <person name="Ni P."/>
            <person name="Dong W."/>
            <person name="Hu S."/>
            <person name="Zeng C."/>
            <person name="Zhang J."/>
            <person name="Zhang Y."/>
            <person name="Li R."/>
            <person name="Xu Z."/>
            <person name="Li S."/>
            <person name="Li X."/>
            <person name="Zheng H."/>
            <person name="Cong L."/>
            <person name="Lin L."/>
            <person name="Yin J."/>
            <person name="Geng J."/>
            <person name="Li G."/>
            <person name="Shi J."/>
            <person name="Liu J."/>
            <person name="Lv H."/>
            <person name="Li J."/>
            <person name="Wang J."/>
            <person name="Deng Y."/>
            <person name="Ran L."/>
            <person name="Shi X."/>
            <person name="Wang X."/>
            <person name="Wu Q."/>
            <person name="Li C."/>
            <person name="Ren X."/>
            <person name="Wang J."/>
            <person name="Wang X."/>
            <person name="Li D."/>
            <person name="Liu D."/>
            <person name="Zhang X."/>
            <person name="Ji Z."/>
            <person name="Zhao W."/>
            <person name="Sun Y."/>
            <person name="Zhang Z."/>
            <person name="Bao J."/>
            <person name="Han Y."/>
            <person name="Dong L."/>
            <person name="Ji J."/>
            <person name="Chen P."/>
            <person name="Wu S."/>
            <person name="Liu J."/>
            <person name="Xiao Y."/>
            <person name="Bu D."/>
            <person name="Tan J."/>
            <person name="Yang L."/>
            <person name="Ye C."/>
            <person name="Zhang J."/>
            <person name="Xu J."/>
            <person name="Zhou Y."/>
            <person name="Yu Y."/>
            <person name="Zhang B."/>
            <person name="Zhuang S."/>
            <person name="Wei H."/>
            <person name="Liu B."/>
            <person name="Lei M."/>
            <person name="Yu H."/>
            <person name="Li Y."/>
            <person name="Xu H."/>
            <person name="Wei S."/>
            <person name="He X."/>
            <person name="Fang L."/>
            <person name="Zhang Z."/>
            <person name="Zhang Y."/>
            <person name="Huang X."/>
            <person name="Su Z."/>
            <person name="Tong W."/>
            <person name="Li J."/>
            <person name="Tong Z."/>
            <person name="Li S."/>
            <person name="Ye J."/>
            <person name="Wang L."/>
            <person name="Fang L."/>
            <person name="Lei T."/>
            <person name="Chen C.-S."/>
            <person name="Chen H.-C."/>
            <person name="Xu Z."/>
            <person name="Li H."/>
            <person name="Huang H."/>
            <person name="Zhang F."/>
            <person name="Xu H."/>
            <person name="Li N."/>
            <person name="Zhao C."/>
            <person name="Li S."/>
            <person name="Dong L."/>
            <person name="Huang Y."/>
            <person name="Li L."/>
            <person name="Xi Y."/>
            <person name="Qi Q."/>
            <person name="Li W."/>
            <person name="Zhang B."/>
            <person name="Hu W."/>
            <person name="Zhang Y."/>
            <person name="Tian X."/>
            <person name="Jiao Y."/>
            <person name="Liang X."/>
            <person name="Jin J."/>
            <person name="Gao L."/>
            <person name="Zheng W."/>
            <person name="Hao B."/>
            <person name="Liu S.-M."/>
            <person name="Wang W."/>
            <person name="Yuan L."/>
            <person name="Cao M."/>
            <person name="McDermott J."/>
            <person name="Samudrala R."/>
            <person name="Wang J."/>
            <person name="Wong G.K.-S."/>
            <person name="Yang H."/>
        </authorList>
    </citation>
    <scope>NUCLEOTIDE SEQUENCE [LARGE SCALE GENOMIC DNA]</scope>
    <source>
        <strain>cv. Nipponbare</strain>
    </source>
</reference>
<reference key="6">
    <citation type="journal article" date="2003" name="Science">
        <title>Collection, mapping, and annotation of over 28,000 cDNA clones from japonica rice.</title>
        <authorList>
            <consortium name="The rice full-length cDNA consortium"/>
        </authorList>
    </citation>
    <scope>NUCLEOTIDE SEQUENCE [LARGE SCALE MRNA]</scope>
    <source>
        <strain>cv. Nipponbare</strain>
    </source>
</reference>
<keyword id="KW-1185">Reference proteome</keyword>
<keyword id="KW-0346">Stress response</keyword>
<feature type="chain" id="PRO_0000100053" description="Dehydrin Rab16C">
    <location>
        <begin position="1"/>
        <end position="164"/>
    </location>
</feature>
<feature type="region of interest" description="Disordered" evidence="1">
    <location>
        <begin position="42"/>
        <end position="164"/>
    </location>
</feature>
<feature type="compositionally biased region" description="Gly residues" evidence="1">
    <location>
        <begin position="42"/>
        <end position="51"/>
    </location>
</feature>
<feature type="compositionally biased region" description="Low complexity" evidence="1">
    <location>
        <begin position="105"/>
        <end position="115"/>
    </location>
</feature>
<feature type="compositionally biased region" description="Gly residues" evidence="1">
    <location>
        <begin position="128"/>
        <end position="138"/>
    </location>
</feature>
<feature type="compositionally biased region" description="Basic and acidic residues" evidence="1">
    <location>
        <begin position="147"/>
        <end position="164"/>
    </location>
</feature>
<sequence>MENYQGQHGYGADRVDVYGNPVAGQYGGGATAPGGGHGVMGMGGHHAGAGGQFQPVKEEHKTGGILHRSGSSSSSSSSEDDGMGGRRKKGIKEKIKEKLPGGNKGNNQQQQQMMGNTGGAYGQQGHAGMTGAGTGTGVHGAEYGNTGEKKGFMDKIKEKLPGQH</sequence>